<accession>Q9EPW9</accession>
<accession>Q9WTQ4</accession>
<proteinExistence type="evidence at protein level"/>
<protein>
    <recommendedName>
        <fullName>Toll-like receptor 6</fullName>
    </recommendedName>
    <cdAntigenName>CD286</cdAntigenName>
</protein>
<comment type="function">
    <text evidence="6 7 8">Participates in the innate immune response to Gram-positive bacteria and fungi. Specifically recognizes diacylated and, to a lesser extent, triacylated lipopeptides (PubMed:19931471). In response to diacylated lipopeptides, forms the activation cluster TLR2:TLR6:CD14:CD36, this cluster triggers signaling from the cell surface and subsequently is targeted to the Golgi in a lipid-raft dependent pathway. Acts via MYD88 and TRAF6, leading to NF-kappa-B activation, cytokine secretion and the inflammatory response. Recognizes mycoplasmal macrophage-activating lipopeptide-2kD (MALP-2), soluble tuberculosis factor (STF), phenol-soluble modulin (PSM) and B.burgdorferi outer surface protein A lipoprotein (OspA-L) cooperatively with TLR2. In complex with TLR4, promotes sterile inflammation in monocytes/macrophages in response to oxidized low-density lipoprotein (oxLDL) or amyloid-beta 42. In this context, the initial signal is provided by oxLDL- or amyloid-beta 42-binding to CD36. This event induces the formation of a heterodimer of TLR4 and TLR6, which is rapidly internalized and triggers inflammatory response, leading to the NF-kappa-B-dependent production of CXCL1, CXCL2 and CCL9 cytokines, via MYD88 signaling pathway, and CCL5 cytokine, via TICAM1 signaling pathway, as well as IL1B secretion (PubMed:20037584, PubMed:23812099).</text>
</comment>
<comment type="subunit">
    <text evidence="2 6 9">Homodimer (via cytoplasmic TIR domain) (By similarity). Heterodimer with TLR2 via their respective extracellular domains (PubMed:19931471). Binds MYD88 via their respective TIR domains (Probable). Interacts with CD36, following CD36 stimulation by oxLDL or amyloid-beta 42, and forms a heterodimer with TLR4. The trimeric complex is internalized and triggers inflammatory response. LYN kinase activity facilitates TLR4:TLR6 heterodimerization and signal initiation (By similarity). The heterodimer TLR2:TLR6 interacts with CD14 and CD36 in response to triacylated lipopeptides (By similarity).</text>
</comment>
<comment type="subcellular location">
    <subcellularLocation>
        <location evidence="5">Cell membrane</location>
        <topology evidence="3">Single-pass type I membrane protein</topology>
    </subcellularLocation>
    <subcellularLocation>
        <location evidence="5">Cytoplasmic vesicle</location>
        <location evidence="5">Phagosome membrane</location>
        <topology evidence="3">Single-pass type I membrane protein</topology>
    </subcellularLocation>
    <subcellularLocation>
        <location evidence="2">Membrane raft</location>
    </subcellularLocation>
    <subcellularLocation>
        <location evidence="2">Golgi apparatus</location>
    </subcellularLocation>
    <text evidence="2">Upon complex formation with CD36 and TLR4, internalized through dynamin-dependent endocytosis. Does not reside in lipid rafts before stimulation but accumulates increasingly in the raft upon the presence of the microbial ligand. In response to diacylated lipoproteins, TLR2:TLR6 heterodimers are recruited in lipid rafts, this recruitment determine the intracellular targeting to the Golgi apparatus.</text>
</comment>
<comment type="tissue specificity">
    <text evidence="8">Detected in thymus, spleen, ovary and lung. Expressed in macrohpages.</text>
</comment>
<comment type="disruption phenotype">
    <text evidence="8">Animals with a double knockout of APOE and TLR6, fed a Western diet for 12 weeks, have less aortic plaque formation than single APOE knockout mice. They also show lower serum concentrations of IL1A, ILB and IL18.</text>
</comment>
<comment type="similarity">
    <text evidence="9">Belongs to the Toll-like receptor family.</text>
</comment>
<comment type="caution">
    <text evidence="1 9">In some plant proteins and in human SARM1, the TIR domain has NAD(+) hydrolase (NADase) activity (By similarity). However, despite the presence of the catalytic Asp residue, the isolated TIR domain of human TLR4 lacks NADase activity (By similarity). Based on this, it is unlikely that Toll-like receptors have NADase activity.</text>
</comment>
<comment type="sequence caution" evidence="9">
    <conflict type="erroneous initiation">
        <sequence resource="EMBL-CDS" id="AAG38563"/>
    </conflict>
    <text>Extended N-terminus.</text>
</comment>
<comment type="sequence caution" evidence="9">
    <conflict type="erroneous initiation">
        <sequence resource="EMBL-CDS" id="BAA78632"/>
    </conflict>
    <text>Extended N-terminus.</text>
</comment>
<reference key="1">
    <citation type="journal article" date="1999" name="Gene">
        <title>TLR6: a novel member of an expanding Toll-like receptor family.</title>
        <authorList>
            <person name="Takeuchi O."/>
            <person name="Kawai T."/>
            <person name="Sanjo H."/>
            <person name="Copeland N.G."/>
            <person name="Gilbert D.J."/>
            <person name="Jenkins N.A."/>
            <person name="Takeda K."/>
            <person name="Akira S."/>
        </authorList>
    </citation>
    <scope>NUCLEOTIDE SEQUENCE [MRNA]</scope>
    <source>
        <tissue>Embryo</tissue>
    </source>
</reference>
<reference key="2">
    <citation type="journal article" date="2000" name="Proc. Natl. Acad. Sci. U.S.A.">
        <title>The repertoire for pattern recognition of pathogens by the innate immune system is defined by cooperation between Toll-like receptors.</title>
        <authorList>
            <person name="Ozinsky A."/>
            <person name="Underhill D.M."/>
            <person name="Fontenot J.D."/>
            <person name="Hajjar A.M."/>
            <person name="Smith K.D."/>
            <person name="Wilson C.B."/>
            <person name="Schroeder L."/>
            <person name="Aderem A."/>
        </authorList>
    </citation>
    <scope>NUCLEOTIDE SEQUENCE [MRNA]</scope>
    <scope>MUTAGENESIS OF PRO-680</scope>
    <scope>SUBCELLULAR LOCATION</scope>
    <source>
        <strain>BALB/cJ</strain>
        <tissue>Macrophage</tissue>
    </source>
</reference>
<reference key="3">
    <citation type="journal article" date="2010" name="Nat. Immunol.">
        <title>CD36 ligands promote sterile inflammation through assembly of a Toll-like receptor 4 and 6 heterodimer.</title>
        <authorList>
            <person name="Stewart C.R."/>
            <person name="Stuart L.M."/>
            <person name="Wilkinson K."/>
            <person name="van Gils J.M."/>
            <person name="Deng J."/>
            <person name="Halle A."/>
            <person name="Rayner K.J."/>
            <person name="Boyer L."/>
            <person name="Zhong R."/>
            <person name="Frazier W.A."/>
            <person name="Lacy-Hulbert A."/>
            <person name="El Khoury J."/>
            <person name="Golenbock D.T."/>
            <person name="Moore K.J."/>
        </authorList>
    </citation>
    <scope>FUNCTION</scope>
</reference>
<reference key="4">
    <citation type="journal article" date="2013" name="Nat. Immunol.">
        <title>CD36 coordinates NLRP3 inflammasome activation by facilitating intracellular nucleation of soluble ligands into particulate ligands in sterile inflammation.</title>
        <authorList>
            <person name="Sheedy F.J."/>
            <person name="Grebe A."/>
            <person name="Rayner K.J."/>
            <person name="Kalantari P."/>
            <person name="Ramkhelawon B."/>
            <person name="Carpenter S.B."/>
            <person name="Becker C.E."/>
            <person name="Ediriweera H.N."/>
            <person name="Mullick A.E."/>
            <person name="Golenbock D.T."/>
            <person name="Stuart L.M."/>
            <person name="Latz E."/>
            <person name="Fitzgerald K.A."/>
            <person name="Moore K.J."/>
        </authorList>
    </citation>
    <scope>FUNCTION</scope>
    <scope>DISRUPTION PHENOTYPE</scope>
    <scope>TISSUE SPECIFICITY</scope>
</reference>
<reference key="5">
    <citation type="journal article" date="2009" name="Immunity">
        <title>Recognition of lipopeptide patterns by Toll-like receptor 2-Toll-like receptor 6 heterodimer.</title>
        <authorList>
            <person name="Kang J.Y."/>
            <person name="Nan X."/>
            <person name="Jin M.S."/>
            <person name="Youn S.J."/>
            <person name="Ryu Y.H."/>
            <person name="Mah S."/>
            <person name="Han S.H."/>
            <person name="Lee H."/>
            <person name="Paik S.G."/>
            <person name="Lee J.O."/>
        </authorList>
    </citation>
    <scope>X-RAY CRYSTALLOGRAPHY (2.9 ANGSTROMS) OF 1-483 IN COMPLEX WITH TLR2 AND LIPOPEPTIDE</scope>
    <scope>DISULFIDE BONDS</scope>
    <scope>GLYCOSYLATION AT ASN-144; ASN-195; ASN-214; ASN-253; ASN-359; ASN-401 AND ASN-434</scope>
    <scope>FUNCTION</scope>
    <scope>LRR REPEATS</scope>
    <scope>SUBUNIT</scope>
</reference>
<organism>
    <name type="scientific">Mus musculus</name>
    <name type="common">Mouse</name>
    <dbReference type="NCBI Taxonomy" id="10090"/>
    <lineage>
        <taxon>Eukaryota</taxon>
        <taxon>Metazoa</taxon>
        <taxon>Chordata</taxon>
        <taxon>Craniata</taxon>
        <taxon>Vertebrata</taxon>
        <taxon>Euteleostomi</taxon>
        <taxon>Mammalia</taxon>
        <taxon>Eutheria</taxon>
        <taxon>Euarchontoglires</taxon>
        <taxon>Glires</taxon>
        <taxon>Rodentia</taxon>
        <taxon>Myomorpha</taxon>
        <taxon>Muroidea</taxon>
        <taxon>Muridae</taxon>
        <taxon>Murinae</taxon>
        <taxon>Mus</taxon>
        <taxon>Mus</taxon>
    </lineage>
</organism>
<evidence type="ECO:0000250" key="1">
    <source>
        <dbReference type="UniProtKB" id="O00206"/>
    </source>
</evidence>
<evidence type="ECO:0000250" key="2">
    <source>
        <dbReference type="UniProtKB" id="Q9Y2C9"/>
    </source>
</evidence>
<evidence type="ECO:0000255" key="3"/>
<evidence type="ECO:0000255" key="4">
    <source>
        <dbReference type="PROSITE-ProRule" id="PRU00204"/>
    </source>
</evidence>
<evidence type="ECO:0000269" key="5">
    <source>
    </source>
</evidence>
<evidence type="ECO:0000269" key="6">
    <source>
    </source>
</evidence>
<evidence type="ECO:0000269" key="7">
    <source>
    </source>
</evidence>
<evidence type="ECO:0000269" key="8">
    <source>
    </source>
</evidence>
<evidence type="ECO:0000305" key="9"/>
<evidence type="ECO:0007829" key="10">
    <source>
        <dbReference type="PDB" id="3A79"/>
    </source>
</evidence>
<feature type="signal peptide" evidence="3">
    <location>
        <begin position="1"/>
        <end position="27"/>
    </location>
</feature>
<feature type="chain" id="PRO_0000034732" description="Toll-like receptor 6">
    <location>
        <begin position="28"/>
        <end position="795"/>
    </location>
</feature>
<feature type="topological domain" description="Extracellular" evidence="3">
    <location>
        <begin position="28"/>
        <end position="584"/>
    </location>
</feature>
<feature type="transmembrane region" description="Helical" evidence="3">
    <location>
        <begin position="585"/>
        <end position="605"/>
    </location>
</feature>
<feature type="topological domain" description="Cytoplasmic" evidence="3">
    <location>
        <begin position="606"/>
        <end position="795"/>
    </location>
</feature>
<feature type="repeat" description="LRR 1" evidence="6">
    <location>
        <begin position="54"/>
        <end position="77"/>
    </location>
</feature>
<feature type="repeat" description="LRR 2" evidence="6">
    <location>
        <begin position="78"/>
        <end position="101"/>
    </location>
</feature>
<feature type="repeat" description="LRR 3" evidence="6">
    <location>
        <begin position="102"/>
        <end position="125"/>
    </location>
</feature>
<feature type="repeat" description="LRR 4" evidence="6">
    <location>
        <begin position="126"/>
        <end position="150"/>
    </location>
</feature>
<feature type="repeat" description="LRR 5" evidence="6">
    <location>
        <begin position="151"/>
        <end position="175"/>
    </location>
</feature>
<feature type="repeat" description="LRR 6" evidence="6">
    <location>
        <begin position="176"/>
        <end position="199"/>
    </location>
</feature>
<feature type="repeat" description="LRR 7" evidence="6">
    <location>
        <begin position="200"/>
        <end position="223"/>
    </location>
</feature>
<feature type="repeat" description="LRR 8" evidence="6">
    <location>
        <begin position="224"/>
        <end position="250"/>
    </location>
</feature>
<feature type="repeat" description="LRR 9" evidence="6">
    <location>
        <begin position="251"/>
        <end position="278"/>
    </location>
</feature>
<feature type="repeat" description="LRR 10" evidence="6">
    <location>
        <begin position="279"/>
        <end position="308"/>
    </location>
</feature>
<feature type="repeat" description="LRR 11" evidence="6">
    <location>
        <begin position="309"/>
        <end position="337"/>
    </location>
</feature>
<feature type="repeat" description="LRR 12" evidence="6">
    <location>
        <begin position="338"/>
        <end position="361"/>
    </location>
</feature>
<feature type="repeat" description="LRR 13" evidence="6">
    <location>
        <begin position="362"/>
        <end position="388"/>
    </location>
</feature>
<feature type="repeat" description="LRR 14" evidence="6">
    <location>
        <begin position="389"/>
        <end position="414"/>
    </location>
</feature>
<feature type="repeat" description="LRR 15" evidence="6">
    <location>
        <begin position="415"/>
        <end position="437"/>
    </location>
</feature>
<feature type="repeat" description="LRR 16" evidence="6">
    <location>
        <begin position="438"/>
        <end position="457"/>
    </location>
</feature>
<feature type="repeat" description="LRR 17" evidence="6">
    <location>
        <begin position="458"/>
        <end position="478"/>
    </location>
</feature>
<feature type="repeat" description="LRR 18" evidence="6">
    <location>
        <begin position="479"/>
        <end position="500"/>
    </location>
</feature>
<feature type="repeat" description="LRR 19" evidence="6">
    <location>
        <begin position="501"/>
        <end position="524"/>
    </location>
</feature>
<feature type="domain" description="LRRCT">
    <location>
        <begin position="525"/>
        <end position="576"/>
    </location>
</feature>
<feature type="domain" description="TIR" evidence="4">
    <location>
        <begin position="640"/>
        <end position="781"/>
    </location>
</feature>
<feature type="glycosylation site" description="N-linked (GlcNAc...) asparagine" evidence="3">
    <location>
        <position position="42"/>
    </location>
</feature>
<feature type="glycosylation site" description="N-linked (GlcNAc...) asparagine" evidence="3">
    <location>
        <position position="114"/>
    </location>
</feature>
<feature type="glycosylation site" description="N-linked (GlcNAc...) asparagine" evidence="6">
    <location>
        <position position="144"/>
    </location>
</feature>
<feature type="glycosylation site" description="N-linked (GlcNAc...) asparagine" evidence="6">
    <location>
        <position position="195"/>
    </location>
</feature>
<feature type="glycosylation site" description="N-linked (GlcNAc...) asparagine" evidence="6">
    <location>
        <position position="214"/>
    </location>
</feature>
<feature type="glycosylation site" description="N-linked (GlcNAc...) asparagine" evidence="6">
    <location>
        <position position="253"/>
    </location>
</feature>
<feature type="glycosylation site" description="N-linked (GlcNAc...) asparagine">
    <location>
        <position position="285"/>
    </location>
</feature>
<feature type="glycosylation site" description="N-linked (GlcNAc...) asparagine" evidence="6">
    <location>
        <position position="359"/>
    </location>
</feature>
<feature type="glycosylation site" description="N-linked (GlcNAc...) asparagine" evidence="6">
    <location>
        <position position="401"/>
    </location>
</feature>
<feature type="glycosylation site" description="N-linked (GlcNAc...) asparagine" evidence="6">
    <location>
        <position position="434"/>
    </location>
</feature>
<feature type="disulfide bond" evidence="6">
    <location>
        <begin position="117"/>
        <end position="139"/>
    </location>
</feature>
<feature type="disulfide bond" evidence="6">
    <location>
        <begin position="235"/>
        <end position="265"/>
    </location>
</feature>
<feature type="disulfide bond" evidence="6">
    <location>
        <begin position="348"/>
        <end position="373"/>
    </location>
</feature>
<feature type="disulfide bond" evidence="6">
    <location>
        <begin position="424"/>
        <end position="447"/>
    </location>
</feature>
<feature type="mutagenesis site" description="Dominant negative mutant, blocks response to Gram-positive pathogens." evidence="5">
    <original>P</original>
    <variation>H</variation>
    <location>
        <position position="680"/>
    </location>
</feature>
<feature type="sequence conflict" description="In Ref. 1; BAA78632." evidence="9" ref="1">
    <original>Y</original>
    <variation>H</variation>
    <location>
        <position position="181"/>
    </location>
</feature>
<feature type="strand" evidence="10">
    <location>
        <begin position="35"/>
        <end position="37"/>
    </location>
</feature>
<feature type="strand" evidence="10">
    <location>
        <begin position="56"/>
        <end position="58"/>
    </location>
</feature>
<feature type="helix" evidence="10">
    <location>
        <begin position="69"/>
        <end position="71"/>
    </location>
</feature>
<feature type="turn" evidence="10">
    <location>
        <begin position="72"/>
        <end position="74"/>
    </location>
</feature>
<feature type="strand" evidence="10">
    <location>
        <begin position="80"/>
        <end position="82"/>
    </location>
</feature>
<feature type="turn" evidence="10">
    <location>
        <begin position="93"/>
        <end position="98"/>
    </location>
</feature>
<feature type="strand" evidence="10">
    <location>
        <begin position="104"/>
        <end position="106"/>
    </location>
</feature>
<feature type="strand" evidence="10">
    <location>
        <begin position="124"/>
        <end position="127"/>
    </location>
</feature>
<feature type="helix" evidence="10">
    <location>
        <begin position="140"/>
        <end position="144"/>
    </location>
</feature>
<feature type="strand" evidence="10">
    <location>
        <begin position="150"/>
        <end position="154"/>
    </location>
</feature>
<feature type="turn" evidence="10">
    <location>
        <begin position="160"/>
        <end position="163"/>
    </location>
</feature>
<feature type="helix" evidence="10">
    <location>
        <begin position="164"/>
        <end position="166"/>
    </location>
</feature>
<feature type="strand" evidence="10">
    <location>
        <begin position="171"/>
        <end position="180"/>
    </location>
</feature>
<feature type="strand" evidence="10">
    <location>
        <begin position="185"/>
        <end position="187"/>
    </location>
</feature>
<feature type="strand" evidence="10">
    <location>
        <begin position="190"/>
        <end position="193"/>
    </location>
</feature>
<feature type="strand" evidence="10">
    <location>
        <begin position="196"/>
        <end position="203"/>
    </location>
</feature>
<feature type="strand" evidence="10">
    <location>
        <begin position="205"/>
        <end position="207"/>
    </location>
</feature>
<feature type="strand" evidence="10">
    <location>
        <begin position="214"/>
        <end position="229"/>
    </location>
</feature>
<feature type="helix" evidence="10">
    <location>
        <begin position="235"/>
        <end position="246"/>
    </location>
</feature>
<feature type="strand" evidence="10">
    <location>
        <begin position="252"/>
        <end position="261"/>
    </location>
</feature>
<feature type="helix" evidence="10">
    <location>
        <begin position="263"/>
        <end position="273"/>
    </location>
</feature>
<feature type="strand" evidence="10">
    <location>
        <begin position="276"/>
        <end position="288"/>
    </location>
</feature>
<feature type="strand" evidence="10">
    <location>
        <begin position="306"/>
        <end position="314"/>
    </location>
</feature>
<feature type="helix" evidence="10">
    <location>
        <begin position="321"/>
        <end position="329"/>
    </location>
</feature>
<feature type="strand" evidence="10">
    <location>
        <begin position="334"/>
        <end position="341"/>
    </location>
</feature>
<feature type="strand" evidence="10">
    <location>
        <begin position="357"/>
        <end position="359"/>
    </location>
</feature>
<feature type="turn" evidence="10">
    <location>
        <begin position="367"/>
        <end position="372"/>
    </location>
</feature>
<feature type="strand" evidence="10">
    <location>
        <begin position="381"/>
        <end position="383"/>
    </location>
</feature>
<feature type="helix" evidence="10">
    <location>
        <begin position="394"/>
        <end position="397"/>
    </location>
</feature>
<feature type="turn" evidence="10">
    <location>
        <begin position="398"/>
        <end position="401"/>
    </location>
</feature>
<feature type="strand" evidence="10">
    <location>
        <begin position="407"/>
        <end position="409"/>
    </location>
</feature>
<feature type="strand" evidence="10">
    <location>
        <begin position="432"/>
        <end position="434"/>
    </location>
</feature>
<feature type="helix" evidence="10">
    <location>
        <begin position="442"/>
        <end position="445"/>
    </location>
</feature>
<feature type="strand" evidence="10">
    <location>
        <begin position="453"/>
        <end position="456"/>
    </location>
</feature>
<feature type="turn" evidence="10">
    <location>
        <begin position="467"/>
        <end position="470"/>
    </location>
</feature>
<feature type="strand" evidence="10">
    <location>
        <begin position="476"/>
        <end position="479"/>
    </location>
</feature>
<dbReference type="EMBL" id="AB020808">
    <property type="protein sequence ID" value="BAA78632.1"/>
    <property type="status" value="ALT_INIT"/>
    <property type="molecule type" value="mRNA"/>
</dbReference>
<dbReference type="EMBL" id="AF314636">
    <property type="protein sequence ID" value="AAG38563.1"/>
    <property type="status" value="ALT_INIT"/>
    <property type="molecule type" value="mRNA"/>
</dbReference>
<dbReference type="RefSeq" id="NP_001346109.2">
    <property type="nucleotide sequence ID" value="NM_001359180.3"/>
</dbReference>
<dbReference type="RefSeq" id="NP_001371100.1">
    <property type="nucleotide sequence ID" value="NM_001384171.2"/>
</dbReference>
<dbReference type="RefSeq" id="NP_035734.4">
    <property type="nucleotide sequence ID" value="NM_011604.6"/>
</dbReference>
<dbReference type="RefSeq" id="XP_006503920.1">
    <property type="nucleotide sequence ID" value="XM_006503857.2"/>
</dbReference>
<dbReference type="RefSeq" id="XP_006503921.1">
    <property type="nucleotide sequence ID" value="XM_006503858.3"/>
</dbReference>
<dbReference type="RefSeq" id="XP_006503922.1">
    <property type="nucleotide sequence ID" value="XM_006503859.3"/>
</dbReference>
<dbReference type="RefSeq" id="XP_006503923.1">
    <property type="nucleotide sequence ID" value="XM_006503860.1"/>
</dbReference>
<dbReference type="PDB" id="3A79">
    <property type="method" value="X-ray"/>
    <property type="resolution" value="2.90 A"/>
    <property type="chains" value="B=1-482"/>
</dbReference>
<dbReference type="PDBsum" id="3A79"/>
<dbReference type="SMR" id="Q9EPW9"/>
<dbReference type="FunCoup" id="Q9EPW9">
    <property type="interactions" value="180"/>
</dbReference>
<dbReference type="IntAct" id="Q9EPW9">
    <property type="interactions" value="4"/>
</dbReference>
<dbReference type="STRING" id="10090.ENSMUSP00000062096"/>
<dbReference type="ChEMBL" id="CHEMBL2146341"/>
<dbReference type="GlyCosmos" id="Q9EPW9">
    <property type="glycosylation" value="10 sites, No reported glycans"/>
</dbReference>
<dbReference type="GlyGen" id="Q9EPW9">
    <property type="glycosylation" value="10 sites, 2 N-linked glycans (2 sites)"/>
</dbReference>
<dbReference type="iPTMnet" id="Q9EPW9"/>
<dbReference type="PhosphoSitePlus" id="Q9EPW9"/>
<dbReference type="PaxDb" id="10090-ENSMUSP00000062096"/>
<dbReference type="ProteomicsDB" id="258895"/>
<dbReference type="Antibodypedia" id="10461">
    <property type="antibodies" value="879 antibodies from 45 providers"/>
</dbReference>
<dbReference type="DNASU" id="21899"/>
<dbReference type="Ensembl" id="ENSMUST00000062315.7">
    <property type="protein sequence ID" value="ENSMUSP00000062096.6"/>
    <property type="gene ID" value="ENSMUSG00000051498.8"/>
</dbReference>
<dbReference type="GeneID" id="21899"/>
<dbReference type="KEGG" id="mmu:21899"/>
<dbReference type="AGR" id="MGI:1341296"/>
<dbReference type="CTD" id="10333"/>
<dbReference type="MGI" id="MGI:1341296">
    <property type="gene designation" value="Tlr6"/>
</dbReference>
<dbReference type="VEuPathDB" id="HostDB:ENSMUSG00000051498"/>
<dbReference type="eggNOG" id="KOG4641">
    <property type="taxonomic scope" value="Eukaryota"/>
</dbReference>
<dbReference type="GeneTree" id="ENSGT00940000162201"/>
<dbReference type="InParanoid" id="Q9EPW9"/>
<dbReference type="OrthoDB" id="1081807at2759"/>
<dbReference type="PhylomeDB" id="Q9EPW9"/>
<dbReference type="Reactome" id="R-MMU-5686938">
    <property type="pathway name" value="Regulation of TLR by endogenous ligand"/>
</dbReference>
<dbReference type="BioGRID-ORCS" id="21899">
    <property type="hits" value="0 hits in 76 CRISPR screens"/>
</dbReference>
<dbReference type="PRO" id="PR:Q9EPW9"/>
<dbReference type="Proteomes" id="UP000000589">
    <property type="component" value="Chromosome 5"/>
</dbReference>
<dbReference type="RNAct" id="Q9EPW9">
    <property type="molecule type" value="protein"/>
</dbReference>
<dbReference type="Bgee" id="ENSMUSG00000051498">
    <property type="expression patterns" value="Expressed in granulocyte and 55 other cell types or tissues"/>
</dbReference>
<dbReference type="ExpressionAtlas" id="Q9EPW9">
    <property type="expression patterns" value="baseline and differential"/>
</dbReference>
<dbReference type="GO" id="GO:0005794">
    <property type="term" value="C:Golgi apparatus"/>
    <property type="evidence" value="ECO:0000250"/>
    <property type="project" value="UniProtKB"/>
</dbReference>
<dbReference type="GO" id="GO:0045121">
    <property type="term" value="C:membrane raft"/>
    <property type="evidence" value="ECO:0000250"/>
    <property type="project" value="UniProtKB"/>
</dbReference>
<dbReference type="GO" id="GO:0030670">
    <property type="term" value="C:phagocytic vesicle membrane"/>
    <property type="evidence" value="ECO:0007669"/>
    <property type="project" value="UniProtKB-SubCell"/>
</dbReference>
<dbReference type="GO" id="GO:0035355">
    <property type="term" value="C:Toll-like receptor 2-Toll-like receptor 6 protein complex"/>
    <property type="evidence" value="ECO:0000314"/>
    <property type="project" value="MGI"/>
</dbReference>
<dbReference type="GO" id="GO:0042498">
    <property type="term" value="F:diacyl lipopeptide binding"/>
    <property type="evidence" value="ECO:0000314"/>
    <property type="project" value="MGI"/>
</dbReference>
<dbReference type="GO" id="GO:0042802">
    <property type="term" value="F:identical protein binding"/>
    <property type="evidence" value="ECO:0000250"/>
    <property type="project" value="UniProtKB"/>
</dbReference>
<dbReference type="GO" id="GO:0071723">
    <property type="term" value="F:lipopeptide binding"/>
    <property type="evidence" value="ECO:0000315"/>
    <property type="project" value="UniProtKB"/>
</dbReference>
<dbReference type="GO" id="GO:0061809">
    <property type="term" value="F:NAD+ nucleosidase activity, cyclic ADP-ribose generating"/>
    <property type="evidence" value="ECO:0007669"/>
    <property type="project" value="UniProtKB-EC"/>
</dbReference>
<dbReference type="GO" id="GO:0046982">
    <property type="term" value="F:protein heterodimerization activity"/>
    <property type="evidence" value="ECO:0007669"/>
    <property type="project" value="Ensembl"/>
</dbReference>
<dbReference type="GO" id="GO:0035663">
    <property type="term" value="F:Toll-like receptor 2 binding"/>
    <property type="evidence" value="ECO:0007669"/>
    <property type="project" value="Ensembl"/>
</dbReference>
<dbReference type="GO" id="GO:0004888">
    <property type="term" value="F:transmembrane signaling receptor activity"/>
    <property type="evidence" value="ECO:0007669"/>
    <property type="project" value="InterPro"/>
</dbReference>
<dbReference type="GO" id="GO:1904646">
    <property type="term" value="P:cellular response to amyloid-beta"/>
    <property type="evidence" value="ECO:0007669"/>
    <property type="project" value="Ensembl"/>
</dbReference>
<dbReference type="GO" id="GO:0071726">
    <property type="term" value="P:cellular response to diacyl bacterial lipopeptide"/>
    <property type="evidence" value="ECO:0000250"/>
    <property type="project" value="UniProtKB"/>
</dbReference>
<dbReference type="GO" id="GO:0140052">
    <property type="term" value="P:cellular response to oxidised low-density lipoprotein particle stimulus"/>
    <property type="evidence" value="ECO:0000316"/>
    <property type="project" value="ARUK-UCL"/>
</dbReference>
<dbReference type="GO" id="GO:0042496">
    <property type="term" value="P:detection of diacyl bacterial lipopeptide"/>
    <property type="evidence" value="ECO:0000266"/>
    <property type="project" value="MGI"/>
</dbReference>
<dbReference type="GO" id="GO:0045087">
    <property type="term" value="P:innate immune response"/>
    <property type="evidence" value="ECO:0007669"/>
    <property type="project" value="UniProtKB-KW"/>
</dbReference>
<dbReference type="GO" id="GO:0001774">
    <property type="term" value="P:microglial cell activation"/>
    <property type="evidence" value="ECO:0007669"/>
    <property type="project" value="Ensembl"/>
</dbReference>
<dbReference type="GO" id="GO:0002755">
    <property type="term" value="P:MyD88-dependent toll-like receptor signaling pathway"/>
    <property type="evidence" value="ECO:0000316"/>
    <property type="project" value="ARUK-UCL"/>
</dbReference>
<dbReference type="GO" id="GO:0032717">
    <property type="term" value="P:negative regulation of interleukin-8 production"/>
    <property type="evidence" value="ECO:0007669"/>
    <property type="project" value="Ensembl"/>
</dbReference>
<dbReference type="GO" id="GO:0034136">
    <property type="term" value="P:negative regulation of toll-like receptor 2 signaling pathway"/>
    <property type="evidence" value="ECO:0007669"/>
    <property type="project" value="Ensembl"/>
</dbReference>
<dbReference type="GO" id="GO:0032720">
    <property type="term" value="P:negative regulation of tumor necrosis factor production"/>
    <property type="evidence" value="ECO:0000316"/>
    <property type="project" value="ARUK-UCL"/>
</dbReference>
<dbReference type="GO" id="GO:0046209">
    <property type="term" value="P:nitric oxide metabolic process"/>
    <property type="evidence" value="ECO:0007669"/>
    <property type="project" value="Ensembl"/>
</dbReference>
<dbReference type="GO" id="GO:0043123">
    <property type="term" value="P:positive regulation of canonical NF-kappaB signal transduction"/>
    <property type="evidence" value="ECO:0000266"/>
    <property type="project" value="MGI"/>
</dbReference>
<dbReference type="GO" id="GO:1900017">
    <property type="term" value="P:positive regulation of cytokine production involved in inflammatory response"/>
    <property type="evidence" value="ECO:0000316"/>
    <property type="project" value="ARUK-UCL"/>
</dbReference>
<dbReference type="GO" id="GO:2001238">
    <property type="term" value="P:positive regulation of extrinsic apoptotic signaling pathway"/>
    <property type="evidence" value="ECO:0000316"/>
    <property type="project" value="ARUK-UCL"/>
</dbReference>
<dbReference type="GO" id="GO:0010628">
    <property type="term" value="P:positive regulation of gene expression"/>
    <property type="evidence" value="ECO:0000315"/>
    <property type="project" value="ARUK-UCL"/>
</dbReference>
<dbReference type="GO" id="GO:0050729">
    <property type="term" value="P:positive regulation of inflammatory response"/>
    <property type="evidence" value="ECO:0000316"/>
    <property type="project" value="ARUK-UCL"/>
</dbReference>
<dbReference type="GO" id="GO:0032731">
    <property type="term" value="P:positive regulation of interleukin-1 beta production"/>
    <property type="evidence" value="ECO:0000314"/>
    <property type="project" value="UniProtKB"/>
</dbReference>
<dbReference type="GO" id="GO:0032735">
    <property type="term" value="P:positive regulation of interleukin-12 production"/>
    <property type="evidence" value="ECO:0000303"/>
    <property type="project" value="UniProtKB"/>
</dbReference>
<dbReference type="GO" id="GO:0032755">
    <property type="term" value="P:positive regulation of interleukin-6 production"/>
    <property type="evidence" value="ECO:0000250"/>
    <property type="project" value="UniProtKB"/>
</dbReference>
<dbReference type="GO" id="GO:0043032">
    <property type="term" value="P:positive regulation of macrophage activation"/>
    <property type="evidence" value="ECO:0000316"/>
    <property type="project" value="ARUK-UCL"/>
</dbReference>
<dbReference type="GO" id="GO:0045429">
    <property type="term" value="P:positive regulation of nitric oxide biosynthetic process"/>
    <property type="evidence" value="ECO:0000316"/>
    <property type="project" value="ARUK-UCL"/>
</dbReference>
<dbReference type="GO" id="GO:1900227">
    <property type="term" value="P:positive regulation of NLRP3 inflammasome complex assembly"/>
    <property type="evidence" value="ECO:0000314"/>
    <property type="project" value="UniProtKB"/>
</dbReference>
<dbReference type="GO" id="GO:1903428">
    <property type="term" value="P:positive regulation of reactive oxygen species biosynthetic process"/>
    <property type="evidence" value="ECO:0000315"/>
    <property type="project" value="ARUK-UCL"/>
</dbReference>
<dbReference type="GO" id="GO:0038124">
    <property type="term" value="P:toll-like receptor TLR6:TLR2 signaling pathway"/>
    <property type="evidence" value="ECO:0007669"/>
    <property type="project" value="Ensembl"/>
</dbReference>
<dbReference type="GO" id="GO:0035666">
    <property type="term" value="P:TRIF-dependent toll-like receptor signaling pathway"/>
    <property type="evidence" value="ECO:0000316"/>
    <property type="project" value="ARUK-UCL"/>
</dbReference>
<dbReference type="FunFam" id="3.40.50.10140:FF:000001">
    <property type="entry name" value="Toll-like receptor 2"/>
    <property type="match status" value="1"/>
</dbReference>
<dbReference type="FunFam" id="3.80.10.10:FF:000046">
    <property type="entry name" value="Toll-like receptor 2"/>
    <property type="match status" value="1"/>
</dbReference>
<dbReference type="Gene3D" id="3.80.10.10">
    <property type="entry name" value="Ribonuclease Inhibitor"/>
    <property type="match status" value="1"/>
</dbReference>
<dbReference type="Gene3D" id="3.40.50.10140">
    <property type="entry name" value="Toll/interleukin-1 receptor homology (TIR) domain"/>
    <property type="match status" value="1"/>
</dbReference>
<dbReference type="InterPro" id="IPR000483">
    <property type="entry name" value="Cys-rich_flank_reg_C"/>
</dbReference>
<dbReference type="InterPro" id="IPR001611">
    <property type="entry name" value="Leu-rich_rpt"/>
</dbReference>
<dbReference type="InterPro" id="IPR003591">
    <property type="entry name" value="Leu-rich_rpt_typical-subtyp"/>
</dbReference>
<dbReference type="InterPro" id="IPR032675">
    <property type="entry name" value="LRR_dom_sf"/>
</dbReference>
<dbReference type="InterPro" id="IPR000157">
    <property type="entry name" value="TIR_dom"/>
</dbReference>
<dbReference type="InterPro" id="IPR017241">
    <property type="entry name" value="Toll-like_receptor"/>
</dbReference>
<dbReference type="InterPro" id="IPR035897">
    <property type="entry name" value="Toll_tir_struct_dom_sf"/>
</dbReference>
<dbReference type="PANTHER" id="PTHR24365">
    <property type="entry name" value="TOLL-LIKE RECEPTOR"/>
    <property type="match status" value="1"/>
</dbReference>
<dbReference type="PANTHER" id="PTHR24365:SF422">
    <property type="entry name" value="TOLL-LIKE RECEPTOR 6"/>
    <property type="match status" value="1"/>
</dbReference>
<dbReference type="Pfam" id="PF13855">
    <property type="entry name" value="LRR_8"/>
    <property type="match status" value="1"/>
</dbReference>
<dbReference type="Pfam" id="PF01582">
    <property type="entry name" value="TIR"/>
    <property type="match status" value="1"/>
</dbReference>
<dbReference type="PIRSF" id="PIRSF037595">
    <property type="entry name" value="Toll-like_receptor"/>
    <property type="match status" value="1"/>
</dbReference>
<dbReference type="PRINTS" id="PR01537">
    <property type="entry name" value="INTRLKN1R1F"/>
</dbReference>
<dbReference type="SMART" id="SM00369">
    <property type="entry name" value="LRR_TYP"/>
    <property type="match status" value="4"/>
</dbReference>
<dbReference type="SMART" id="SM00082">
    <property type="entry name" value="LRRCT"/>
    <property type="match status" value="1"/>
</dbReference>
<dbReference type="SMART" id="SM00255">
    <property type="entry name" value="TIR"/>
    <property type="match status" value="1"/>
</dbReference>
<dbReference type="SUPFAM" id="SSF52058">
    <property type="entry name" value="L domain-like"/>
    <property type="match status" value="2"/>
</dbReference>
<dbReference type="SUPFAM" id="SSF52200">
    <property type="entry name" value="Toll/Interleukin receptor TIR domain"/>
    <property type="match status" value="1"/>
</dbReference>
<dbReference type="PROSITE" id="PS51450">
    <property type="entry name" value="LRR"/>
    <property type="match status" value="10"/>
</dbReference>
<dbReference type="PROSITE" id="PS50104">
    <property type="entry name" value="TIR"/>
    <property type="match status" value="1"/>
</dbReference>
<gene>
    <name type="primary">Tlr6</name>
</gene>
<keyword id="KW-0002">3D-structure</keyword>
<keyword id="KW-1003">Cell membrane</keyword>
<keyword id="KW-0968">Cytoplasmic vesicle</keyword>
<keyword id="KW-1015">Disulfide bond</keyword>
<keyword id="KW-0325">Glycoprotein</keyword>
<keyword id="KW-0333">Golgi apparatus</keyword>
<keyword id="KW-0391">Immunity</keyword>
<keyword id="KW-0395">Inflammatory response</keyword>
<keyword id="KW-0399">Innate immunity</keyword>
<keyword id="KW-0433">Leucine-rich repeat</keyword>
<keyword id="KW-0472">Membrane</keyword>
<keyword id="KW-0520">NAD</keyword>
<keyword id="KW-0675">Receptor</keyword>
<keyword id="KW-1185">Reference proteome</keyword>
<keyword id="KW-0677">Repeat</keyword>
<keyword id="KW-0732">Signal</keyword>
<keyword id="KW-0812">Transmembrane</keyword>
<keyword id="KW-1133">Transmembrane helix</keyword>
<name>TLR6_MOUSE</name>
<sequence length="795" mass="91116">MSQDRKPIVGSFHFVCALALIVGSMTPFSNELESMVDYSNRNLTHVPKDLPPRTKALSLSQNSISELRMPDISFLSELRVLRLSHNRIRSLDFHVFLFNQDLEYLDVSHNRLQNISCCPMASLRHLDLSFNDFDVLPVCKEFGNLTKLTFLGLSAAKFRQLDLLPVAHLHLSCILLDLVSYHIKGGETESLQIPNTTVLHLVFHPNSLFSVQVNMSVNALGHLQLSNIKLNDENCQRLMTFLSELTRGPTLLNVTLQHIETTWKCSVKLFQFFWPRPVEYLNIYNLTITERIDREEFTYSETALKSLMIEHVKNQVFLFSKEALYSVFAEMNIKMLSISDTPFIHMVCPPSPSSFTFLNFTQNVFTDSVFQGCSTLKRLQTLILQRNGLKNFFKVALMTKNMSSLETLDVSLNSLNSHAYDRTCAWAESILVLNLSSNMLTGSVFRCLPPKVKVLDLHNNRIMSIPKDVTHLQALQELNVASNSLTDLPGCGAFSSLSVLVIDHNSVSHPSEDFFQSCQNIRSLTAGNNPFQCTCELRDFVKNIGWVAREVVEGWPDSYRCDYPESSKGTALRDFHMSPLSCDTVLLTVTIGATMLVLAVTGAFLCLYFDLPWYVRMLCQWTQTRHRARHIPLEELQRNLQFHAFVSYSEHDSAWVKNELLPNLEKDDIRVCLHERNFVPGKSIVENIINFIEKSYKAIFVLSPHFIQSEWCHYELYFAHHNLFHEGSDNLILILLEPILQNNIPSRYHKLRALMAQRTYLEWPTEKGKRGLFWANLRASFIMKLALVNEDDVKT</sequence>